<accession>P64610</accession>
<accession>P46021</accession>
<accession>Q2M905</accession>
<comment type="induction">
    <text evidence="1">Induced by low extracellular levels of magnesium via the PhoQ/PhoP two-component regulatory system.</text>
</comment>
<dbReference type="EMBL" id="U18997">
    <property type="protein sequence ID" value="AAA58009.1"/>
    <property type="molecule type" value="Genomic_DNA"/>
</dbReference>
<dbReference type="EMBL" id="U00096">
    <property type="protein sequence ID" value="AAC76239.1"/>
    <property type="molecule type" value="Genomic_DNA"/>
</dbReference>
<dbReference type="EMBL" id="AP009048">
    <property type="protein sequence ID" value="BAE77251.1"/>
    <property type="molecule type" value="Genomic_DNA"/>
</dbReference>
<dbReference type="PIR" id="A65112">
    <property type="entry name" value="A65112"/>
</dbReference>
<dbReference type="RefSeq" id="NP_417674.1">
    <property type="nucleotide sequence ID" value="NC_000913.3"/>
</dbReference>
<dbReference type="RefSeq" id="WP_000620405.1">
    <property type="nucleotide sequence ID" value="NZ_STEB01000012.1"/>
</dbReference>
<dbReference type="SMR" id="P64610"/>
<dbReference type="BioGRID" id="4261608">
    <property type="interactions" value="194"/>
</dbReference>
<dbReference type="BioGRID" id="852219">
    <property type="interactions" value="1"/>
</dbReference>
<dbReference type="DIP" id="DIP-48162N"/>
<dbReference type="FunCoup" id="P64610">
    <property type="interactions" value="7"/>
</dbReference>
<dbReference type="IntAct" id="P64610">
    <property type="interactions" value="1"/>
</dbReference>
<dbReference type="STRING" id="511145.b3207"/>
<dbReference type="jPOST" id="P64610"/>
<dbReference type="PaxDb" id="511145-b3207"/>
<dbReference type="EnsemblBacteria" id="AAC76239">
    <property type="protein sequence ID" value="AAC76239"/>
    <property type="gene ID" value="b3207"/>
</dbReference>
<dbReference type="GeneID" id="75206063"/>
<dbReference type="GeneID" id="947910"/>
<dbReference type="KEGG" id="ecj:JW3174"/>
<dbReference type="KEGG" id="eco:b3207"/>
<dbReference type="KEGG" id="ecoc:C3026_17450"/>
<dbReference type="PATRIC" id="fig|511145.12.peg.3301"/>
<dbReference type="EchoBASE" id="EB2658"/>
<dbReference type="eggNOG" id="COG0515">
    <property type="taxonomic scope" value="Bacteria"/>
</dbReference>
<dbReference type="HOGENOM" id="CLU_076352_3_1_6"/>
<dbReference type="InParanoid" id="P64610"/>
<dbReference type="OMA" id="RYLQDWS"/>
<dbReference type="OrthoDB" id="595236at2"/>
<dbReference type="PhylomeDB" id="P64610"/>
<dbReference type="BioCyc" id="EcoCyc:G7667-MONOMER"/>
<dbReference type="PRO" id="PR:P64610"/>
<dbReference type="Proteomes" id="UP000000625">
    <property type="component" value="Chromosome"/>
</dbReference>
<dbReference type="GO" id="GO:0005886">
    <property type="term" value="C:plasma membrane"/>
    <property type="evidence" value="ECO:0007005"/>
    <property type="project" value="EcoCyc"/>
</dbReference>
<dbReference type="InterPro" id="IPR011009">
    <property type="entry name" value="Kinase-like_dom_sf"/>
</dbReference>
<dbReference type="InterPro" id="IPR019647">
    <property type="entry name" value="PhoP_reg_network_YrbL"/>
</dbReference>
<dbReference type="NCBIfam" id="NF007671">
    <property type="entry name" value="PRK10345.1"/>
    <property type="match status" value="1"/>
</dbReference>
<dbReference type="Pfam" id="PF10707">
    <property type="entry name" value="YrbL-PhoP_reg"/>
    <property type="match status" value="1"/>
</dbReference>
<dbReference type="SUPFAM" id="SSF56112">
    <property type="entry name" value="Protein kinase-like (PK-like)"/>
    <property type="match status" value="1"/>
</dbReference>
<sequence length="210" mass="24345">MIRLSEQSPLGTGRHRKCYAHPEDAQRCIKIVYHRGDGGDKEIRRELKYYAHLGRRLKDWSGIPRYHGTVETDCGTGYVYDVIADFDGKPSITLTEFAEQCRYEEDIAQLRQLLKQLKRYLQDNRIVTMSLKPQNILCHRISESEVIPVVCDNIGESTLIPLATWSKWCCLRKQERLWKRFIAQPALAIALQKDLQPRESKTLALTSREA</sequence>
<reference key="1">
    <citation type="journal article" date="1997" name="Science">
        <title>The complete genome sequence of Escherichia coli K-12.</title>
        <authorList>
            <person name="Blattner F.R."/>
            <person name="Plunkett G. III"/>
            <person name="Bloch C.A."/>
            <person name="Perna N.T."/>
            <person name="Burland V."/>
            <person name="Riley M."/>
            <person name="Collado-Vides J."/>
            <person name="Glasner J.D."/>
            <person name="Rode C.K."/>
            <person name="Mayhew G.F."/>
            <person name="Gregor J."/>
            <person name="Davis N.W."/>
            <person name="Kirkpatrick H.A."/>
            <person name="Goeden M.A."/>
            <person name="Rose D.J."/>
            <person name="Mau B."/>
            <person name="Shao Y."/>
        </authorList>
    </citation>
    <scope>NUCLEOTIDE SEQUENCE [LARGE SCALE GENOMIC DNA]</scope>
    <source>
        <strain>K12 / MG1655 / ATCC 47076</strain>
    </source>
</reference>
<reference key="2">
    <citation type="journal article" date="2006" name="Mol. Syst. Biol.">
        <title>Highly accurate genome sequences of Escherichia coli K-12 strains MG1655 and W3110.</title>
        <authorList>
            <person name="Hayashi K."/>
            <person name="Morooka N."/>
            <person name="Yamamoto Y."/>
            <person name="Fujita K."/>
            <person name="Isono K."/>
            <person name="Choi S."/>
            <person name="Ohtsubo E."/>
            <person name="Baba T."/>
            <person name="Wanner B.L."/>
            <person name="Mori H."/>
            <person name="Horiuchi T."/>
        </authorList>
    </citation>
    <scope>NUCLEOTIDE SEQUENCE [LARGE SCALE GENOMIC DNA]</scope>
    <source>
        <strain>K12 / W3110 / ATCC 27325 / DSM 5911</strain>
    </source>
</reference>
<reference key="3">
    <citation type="journal article" date="2003" name="J. Bacteriol.">
        <title>Identification and molecular characterization of the Mg2+ stimulon of Escherichia coli.</title>
        <authorList>
            <person name="Minagawa S."/>
            <person name="Ogasawara H."/>
            <person name="Kato A."/>
            <person name="Yamamoto K."/>
            <person name="Eguchi Y."/>
            <person name="Oshima T."/>
            <person name="Mori H."/>
            <person name="Ishihama A."/>
            <person name="Utsumi R."/>
        </authorList>
    </citation>
    <scope>INDUCTION</scope>
    <source>
        <strain>K12</strain>
    </source>
</reference>
<protein>
    <recommendedName>
        <fullName>Uncharacterized protein YrbL</fullName>
    </recommendedName>
</protein>
<keyword id="KW-1185">Reference proteome</keyword>
<name>YRBL_ECOLI</name>
<proteinExistence type="evidence at transcript level"/>
<evidence type="ECO:0000269" key="1">
    <source>
    </source>
</evidence>
<gene>
    <name type="primary">yrbL</name>
    <name type="ordered locus">b3207</name>
    <name type="ordered locus">JW3174</name>
</gene>
<feature type="chain" id="PRO_0000169475" description="Uncharacterized protein YrbL">
    <location>
        <begin position="1"/>
        <end position="210"/>
    </location>
</feature>
<organism>
    <name type="scientific">Escherichia coli (strain K12)</name>
    <dbReference type="NCBI Taxonomy" id="83333"/>
    <lineage>
        <taxon>Bacteria</taxon>
        <taxon>Pseudomonadati</taxon>
        <taxon>Pseudomonadota</taxon>
        <taxon>Gammaproteobacteria</taxon>
        <taxon>Enterobacterales</taxon>
        <taxon>Enterobacteriaceae</taxon>
        <taxon>Escherichia</taxon>
    </lineage>
</organism>